<evidence type="ECO:0000250" key="1"/>
<evidence type="ECO:0000255" key="2">
    <source>
        <dbReference type="PROSITE-ProRule" id="PRU10035"/>
    </source>
</evidence>
<evidence type="ECO:0000255" key="3">
    <source>
        <dbReference type="PROSITE-ProRule" id="PRU10036"/>
    </source>
</evidence>
<evidence type="ECO:0000305" key="4"/>
<keyword id="KW-0106">Calcium</keyword>
<keyword id="KW-0903">Direct protein sequencing</keyword>
<keyword id="KW-0378">Hydrolase</keyword>
<keyword id="KW-0442">Lipid degradation</keyword>
<keyword id="KW-0443">Lipid metabolism</keyword>
<keyword id="KW-0964">Secreted</keyword>
<sequence length="12" mass="1398">SLLBFKBMIEST</sequence>
<proteinExistence type="evidence at protein level"/>
<comment type="function">
    <text>PLA2 catalyzes the calcium-dependent hydrolysis of the 2-acyl groups in 3-sn-phosphoglycerides.</text>
</comment>
<comment type="catalytic activity">
    <reaction evidence="2 3">
        <text>a 1,2-diacyl-sn-glycero-3-phosphocholine + H2O = a 1-acyl-sn-glycero-3-phosphocholine + a fatty acid + H(+)</text>
        <dbReference type="Rhea" id="RHEA:15801"/>
        <dbReference type="ChEBI" id="CHEBI:15377"/>
        <dbReference type="ChEBI" id="CHEBI:15378"/>
        <dbReference type="ChEBI" id="CHEBI:28868"/>
        <dbReference type="ChEBI" id="CHEBI:57643"/>
        <dbReference type="ChEBI" id="CHEBI:58168"/>
        <dbReference type="EC" id="3.1.1.4"/>
    </reaction>
</comment>
<comment type="cofactor">
    <cofactor evidence="1">
        <name>Ca(2+)</name>
        <dbReference type="ChEBI" id="CHEBI:29108"/>
    </cofactor>
    <text evidence="1">Binds 1 Ca(2+) ion.</text>
</comment>
<comment type="subcellular location">
    <subcellularLocation>
        <location>Secreted</location>
    </subcellularLocation>
</comment>
<comment type="tissue specificity">
    <text>Expressed by the venom gland.</text>
</comment>
<comment type="similarity">
    <text evidence="4">Belongs to the phospholipase A2 family. Group I subfamily.</text>
</comment>
<accession>P25072</accession>
<protein>
    <recommendedName>
        <fullName>Phospholipase A2 1</fullName>
        <shortName>svPLA2</shortName>
        <ecNumber>3.1.1.4</ecNumber>
    </recommendedName>
    <alternativeName>
        <fullName>Phosphatidylcholine 2-acylhydrolase</fullName>
    </alternativeName>
</protein>
<dbReference type="EC" id="3.1.1.4"/>
<dbReference type="GO" id="GO:0005576">
    <property type="term" value="C:extracellular region"/>
    <property type="evidence" value="ECO:0007669"/>
    <property type="project" value="UniProtKB-SubCell"/>
</dbReference>
<dbReference type="GO" id="GO:0004623">
    <property type="term" value="F:phospholipase A2 activity"/>
    <property type="evidence" value="ECO:0007669"/>
    <property type="project" value="UniProtKB-EC"/>
</dbReference>
<dbReference type="GO" id="GO:0016042">
    <property type="term" value="P:lipid catabolic process"/>
    <property type="evidence" value="ECO:0007669"/>
    <property type="project" value="UniProtKB-KW"/>
</dbReference>
<name>PA21_MICTM</name>
<organism>
    <name type="scientific">Micrurus tener microgalbineus</name>
    <name type="common">Spotted coral snake</name>
    <name type="synonym">Micrurus fulvius microgalbineus</name>
    <dbReference type="NCBI Taxonomy" id="8636"/>
    <lineage>
        <taxon>Eukaryota</taxon>
        <taxon>Metazoa</taxon>
        <taxon>Chordata</taxon>
        <taxon>Craniata</taxon>
        <taxon>Vertebrata</taxon>
        <taxon>Euteleostomi</taxon>
        <taxon>Lepidosauria</taxon>
        <taxon>Squamata</taxon>
        <taxon>Bifurcata</taxon>
        <taxon>Unidentata</taxon>
        <taxon>Episquamata</taxon>
        <taxon>Toxicofera</taxon>
        <taxon>Serpentes</taxon>
        <taxon>Colubroidea</taxon>
        <taxon>Elapidae</taxon>
        <taxon>Elapinae</taxon>
        <taxon>Micrurus</taxon>
    </lineage>
</organism>
<feature type="chain" id="PRO_0000161657" description="Phospholipase A2 1">
    <location>
        <begin position="1"/>
        <end position="12" status="greater than"/>
    </location>
</feature>
<feature type="non-terminal residue">
    <location>
        <position position="12"/>
    </location>
</feature>
<reference key="1">
    <citation type="journal article" date="1979" name="Biochem. J.">
        <title>Purification and characterization of a phospholipase A2 from the venom of the coral snake, Micrurus fulvius microgalbineus (Brown and Smith).</title>
        <authorList>
            <person name="Possani L.D."/>
            <person name="Alagon A.C."/>
            <person name="Fletcher P.L. Jr."/>
            <person name="Varela M.J."/>
            <person name="Julia J.Z."/>
        </authorList>
    </citation>
    <scope>PROTEIN SEQUENCE</scope>
    <source>
        <tissue>Venom</tissue>
    </source>
</reference>